<keyword id="KW-1185">Reference proteome</keyword>
<reference key="1">
    <citation type="journal article" date="2002" name="Nature">
        <title>Sequence and analysis of chromosome 2 of Dictyostelium discoideum.</title>
        <authorList>
            <person name="Gloeckner G."/>
            <person name="Eichinger L."/>
            <person name="Szafranski K."/>
            <person name="Pachebat J.A."/>
            <person name="Bankier A.T."/>
            <person name="Dear P.H."/>
            <person name="Lehmann R."/>
            <person name="Baumgart C."/>
            <person name="Parra G."/>
            <person name="Abril J.F."/>
            <person name="Guigo R."/>
            <person name="Kumpf K."/>
            <person name="Tunggal B."/>
            <person name="Cox E.C."/>
            <person name="Quail M.A."/>
            <person name="Platzer M."/>
            <person name="Rosenthal A."/>
            <person name="Noegel A.A."/>
        </authorList>
    </citation>
    <scope>NUCLEOTIDE SEQUENCE [LARGE SCALE GENOMIC DNA]</scope>
    <source>
        <strain>AX4</strain>
    </source>
</reference>
<reference key="2">
    <citation type="journal article" date="2005" name="Nature">
        <title>The genome of the social amoeba Dictyostelium discoideum.</title>
        <authorList>
            <person name="Eichinger L."/>
            <person name="Pachebat J.A."/>
            <person name="Gloeckner G."/>
            <person name="Rajandream M.A."/>
            <person name="Sucgang R."/>
            <person name="Berriman M."/>
            <person name="Song J."/>
            <person name="Olsen R."/>
            <person name="Szafranski K."/>
            <person name="Xu Q."/>
            <person name="Tunggal B."/>
            <person name="Kummerfeld S."/>
            <person name="Madera M."/>
            <person name="Konfortov B.A."/>
            <person name="Rivero F."/>
            <person name="Bankier A.T."/>
            <person name="Lehmann R."/>
            <person name="Hamlin N."/>
            <person name="Davies R."/>
            <person name="Gaudet P."/>
            <person name="Fey P."/>
            <person name="Pilcher K."/>
            <person name="Chen G."/>
            <person name="Saunders D."/>
            <person name="Sodergren E.J."/>
            <person name="Davis P."/>
            <person name="Kerhornou A."/>
            <person name="Nie X."/>
            <person name="Hall N."/>
            <person name="Anjard C."/>
            <person name="Hemphill L."/>
            <person name="Bason N."/>
            <person name="Farbrother P."/>
            <person name="Desany B."/>
            <person name="Just E."/>
            <person name="Morio T."/>
            <person name="Rost R."/>
            <person name="Churcher C.M."/>
            <person name="Cooper J."/>
            <person name="Haydock S."/>
            <person name="van Driessche N."/>
            <person name="Cronin A."/>
            <person name="Goodhead I."/>
            <person name="Muzny D.M."/>
            <person name="Mourier T."/>
            <person name="Pain A."/>
            <person name="Lu M."/>
            <person name="Harper D."/>
            <person name="Lindsay R."/>
            <person name="Hauser H."/>
            <person name="James K.D."/>
            <person name="Quiles M."/>
            <person name="Madan Babu M."/>
            <person name="Saito T."/>
            <person name="Buchrieser C."/>
            <person name="Wardroper A."/>
            <person name="Felder M."/>
            <person name="Thangavelu M."/>
            <person name="Johnson D."/>
            <person name="Knights A."/>
            <person name="Loulseged H."/>
            <person name="Mungall K.L."/>
            <person name="Oliver K."/>
            <person name="Price C."/>
            <person name="Quail M.A."/>
            <person name="Urushihara H."/>
            <person name="Hernandez J."/>
            <person name="Rabbinowitsch E."/>
            <person name="Steffen D."/>
            <person name="Sanders M."/>
            <person name="Ma J."/>
            <person name="Kohara Y."/>
            <person name="Sharp S."/>
            <person name="Simmonds M.N."/>
            <person name="Spiegler S."/>
            <person name="Tivey A."/>
            <person name="Sugano S."/>
            <person name="White B."/>
            <person name="Walker D."/>
            <person name="Woodward J.R."/>
            <person name="Winckler T."/>
            <person name="Tanaka Y."/>
            <person name="Shaulsky G."/>
            <person name="Schleicher M."/>
            <person name="Weinstock G.M."/>
            <person name="Rosenthal A."/>
            <person name="Cox E.C."/>
            <person name="Chisholm R.L."/>
            <person name="Gibbs R.A."/>
            <person name="Loomis W.F."/>
            <person name="Platzer M."/>
            <person name="Kay R.R."/>
            <person name="Williams J.G."/>
            <person name="Dear P.H."/>
            <person name="Noegel A.A."/>
            <person name="Barrell B.G."/>
            <person name="Kuspa A."/>
        </authorList>
    </citation>
    <scope>NUCLEOTIDE SEQUENCE [LARGE SCALE GENOMIC DNA]</scope>
    <source>
        <strain>AX4</strain>
    </source>
</reference>
<accession>Q556L8</accession>
<accession>Q86AM0</accession>
<dbReference type="EMBL" id="AAFI02000009">
    <property type="protein sequence ID" value="EAL70935.1"/>
    <property type="molecule type" value="Genomic_DNA"/>
</dbReference>
<dbReference type="EMBL" id="AAFI02000011">
    <property type="protein sequence ID" value="EAL70415.1"/>
    <property type="molecule type" value="Genomic_DNA"/>
</dbReference>
<dbReference type="RefSeq" id="XP_644340.1">
    <property type="nucleotide sequence ID" value="XM_639248.1"/>
</dbReference>
<dbReference type="RefSeq" id="XP_645074.1">
    <property type="nucleotide sequence ID" value="XM_639982.1"/>
</dbReference>
<dbReference type="PaxDb" id="44689-DDB0168004"/>
<dbReference type="EnsemblProtists" id="EAL70415">
    <property type="protein sequence ID" value="EAL70415"/>
    <property type="gene ID" value="DDB_G0273963"/>
</dbReference>
<dbReference type="EnsemblProtists" id="EAL70935">
    <property type="protein sequence ID" value="EAL70935"/>
    <property type="gene ID" value="DDB_G0272596"/>
</dbReference>
<dbReference type="GeneID" id="8618749"/>
<dbReference type="GeneID" id="8619227"/>
<dbReference type="KEGG" id="ddi:DDB_G0272596"/>
<dbReference type="KEGG" id="ddi:DDB_G0273963"/>
<dbReference type="dictyBase" id="DDB_G0272596"/>
<dbReference type="dictyBase" id="DDB_G0273963"/>
<dbReference type="VEuPathDB" id="AmoebaDB:DDB_G0273963"/>
<dbReference type="HOGENOM" id="CLU_167198_0_0_1"/>
<dbReference type="InParanoid" id="Q556L8"/>
<dbReference type="PhylomeDB" id="Q556L8"/>
<dbReference type="PRO" id="PR:Q556L8"/>
<dbReference type="Proteomes" id="UP000002195">
    <property type="component" value="Chromosome 2"/>
</dbReference>
<dbReference type="GO" id="GO:0007155">
    <property type="term" value="P:cell adhesion"/>
    <property type="evidence" value="ECO:0007669"/>
    <property type="project" value="InterPro"/>
</dbReference>
<dbReference type="InterPro" id="IPR008601">
    <property type="entry name" value="Dicty_CAD"/>
</dbReference>
<dbReference type="Pfam" id="PF05720">
    <property type="entry name" value="Dicty_CAD"/>
    <property type="match status" value="1"/>
</dbReference>
<gene>
    <name type="ORF">DDB_G0272596</name>
</gene>
<gene>
    <name type="ORF">DDB_G0273963</name>
</gene>
<protein>
    <recommendedName>
        <fullName>Uncharacterized protein csb family protein DDB_G0272596/DDB_G0273963</fullName>
    </recommendedName>
</protein>
<feature type="chain" id="PRO_0000312413" description="Uncharacterized protein csb family protein DDB_G0272596/DDB_G0273963">
    <location>
        <begin position="1"/>
        <end position="100"/>
    </location>
</feature>
<name>CSBL5_DICDI</name>
<sequence length="100" mass="11529">MIIKNNDGESTISGKAITLPTPMIFPPPLFIRFIQYKTDGKLWSNENFEINSGKVECNGEDYELVQSRCITQKIDDDSENVMDIRIMPSRPLNRDLPYFN</sequence>
<comment type="similarity">
    <text evidence="1">Belongs to the csb family.</text>
</comment>
<comment type="caution">
    <text evidence="1">The gene for this protein is duplicated in strains AX3 and AX4. These strains contain a duplication of a segment of 750 kb of chromosome 2 compared to the corresponding sequence in strain AX2.</text>
</comment>
<proteinExistence type="inferred from homology"/>
<organism>
    <name type="scientific">Dictyostelium discoideum</name>
    <name type="common">Social amoeba</name>
    <dbReference type="NCBI Taxonomy" id="44689"/>
    <lineage>
        <taxon>Eukaryota</taxon>
        <taxon>Amoebozoa</taxon>
        <taxon>Evosea</taxon>
        <taxon>Eumycetozoa</taxon>
        <taxon>Dictyostelia</taxon>
        <taxon>Dictyosteliales</taxon>
        <taxon>Dictyosteliaceae</taxon>
        <taxon>Dictyostelium</taxon>
    </lineage>
</organism>
<evidence type="ECO:0000305" key="1"/>